<evidence type="ECO:0000250" key="1"/>
<evidence type="ECO:0000250" key="2">
    <source>
        <dbReference type="UniProtKB" id="P24941"/>
    </source>
</evidence>
<evidence type="ECO:0000250" key="3">
    <source>
        <dbReference type="UniProtKB" id="P97377"/>
    </source>
</evidence>
<evidence type="ECO:0000250" key="4">
    <source>
        <dbReference type="UniProtKB" id="Q63699"/>
    </source>
</evidence>
<evidence type="ECO:0000255" key="5">
    <source>
        <dbReference type="PROSITE-ProRule" id="PRU00159"/>
    </source>
</evidence>
<evidence type="ECO:0000255" key="6">
    <source>
        <dbReference type="PROSITE-ProRule" id="PRU10027"/>
    </source>
</evidence>
<evidence type="ECO:0000305" key="7"/>
<protein>
    <recommendedName>
        <fullName>Cyclin-dependent kinase 2</fullName>
        <ecNumber evidence="2">2.7.11.22</ecNumber>
    </recommendedName>
    <alternativeName>
        <fullName>Cell division protein kinase 2</fullName>
    </alternativeName>
</protein>
<gene>
    <name type="primary">CDK2</name>
    <name type="synonym">CDKN2</name>
</gene>
<keyword id="KW-0007">Acetylation</keyword>
<keyword id="KW-0067">ATP-binding</keyword>
<keyword id="KW-0131">Cell cycle</keyword>
<keyword id="KW-0132">Cell division</keyword>
<keyword id="KW-0963">Cytoplasm</keyword>
<keyword id="KW-0206">Cytoskeleton</keyword>
<keyword id="KW-0227">DNA damage</keyword>
<keyword id="KW-0234">DNA repair</keyword>
<keyword id="KW-0967">Endosome</keyword>
<keyword id="KW-0418">Kinase</keyword>
<keyword id="KW-0460">Magnesium</keyword>
<keyword id="KW-0469">Meiosis</keyword>
<keyword id="KW-0479">Metal-binding</keyword>
<keyword id="KW-0498">Mitosis</keyword>
<keyword id="KW-0547">Nucleotide-binding</keyword>
<keyword id="KW-0539">Nucleus</keyword>
<keyword id="KW-0597">Phosphoprotein</keyword>
<keyword id="KW-1185">Reference proteome</keyword>
<keyword id="KW-0723">Serine/threonine-protein kinase</keyword>
<keyword id="KW-0808">Transferase</keyword>
<feature type="chain" id="PRO_0000085770" description="Cyclin-dependent kinase 2">
    <location>
        <begin position="1"/>
        <end position="298"/>
    </location>
</feature>
<feature type="domain" description="Protein kinase" evidence="5">
    <location>
        <begin position="4"/>
        <end position="286"/>
    </location>
</feature>
<feature type="active site" description="Proton acceptor" evidence="5 6">
    <location>
        <position position="127"/>
    </location>
</feature>
<feature type="binding site" evidence="5">
    <location>
        <begin position="10"/>
        <end position="18"/>
    </location>
    <ligand>
        <name>ATP</name>
        <dbReference type="ChEBI" id="CHEBI:30616"/>
    </ligand>
</feature>
<feature type="binding site" evidence="5">
    <location>
        <position position="33"/>
    </location>
    <ligand>
        <name>ATP</name>
        <dbReference type="ChEBI" id="CHEBI:30616"/>
    </ligand>
</feature>
<feature type="binding site" evidence="5">
    <location>
        <begin position="81"/>
        <end position="83"/>
    </location>
    <ligand>
        <name>ATP</name>
        <dbReference type="ChEBI" id="CHEBI:30616"/>
    </ligand>
</feature>
<feature type="binding site" evidence="5">
    <location>
        <position position="86"/>
    </location>
    <ligand>
        <name>ATP</name>
        <dbReference type="ChEBI" id="CHEBI:30616"/>
    </ligand>
</feature>
<feature type="binding site" evidence="5">
    <location>
        <begin position="129"/>
        <end position="132"/>
    </location>
    <ligand>
        <name>ATP</name>
        <dbReference type="ChEBI" id="CHEBI:30616"/>
    </ligand>
</feature>
<feature type="binding site" evidence="2">
    <location>
        <position position="132"/>
    </location>
    <ligand>
        <name>Mg(2+)</name>
        <dbReference type="ChEBI" id="CHEBI:18420"/>
    </ligand>
</feature>
<feature type="binding site" evidence="5">
    <location>
        <position position="145"/>
    </location>
    <ligand>
        <name>ATP</name>
        <dbReference type="ChEBI" id="CHEBI:30616"/>
    </ligand>
</feature>
<feature type="binding site" evidence="2">
    <location>
        <position position="145"/>
    </location>
    <ligand>
        <name>Mg(2+)</name>
        <dbReference type="ChEBI" id="CHEBI:18420"/>
    </ligand>
</feature>
<feature type="site" description="CDK7 binding" evidence="2">
    <location>
        <position position="9"/>
    </location>
</feature>
<feature type="site" description="CDK7 binding" evidence="2">
    <location>
        <begin position="88"/>
        <end position="89"/>
    </location>
</feature>
<feature type="site" description="CDK7 binding" evidence="2">
    <location>
        <position position="166"/>
    </location>
</feature>
<feature type="modified residue" description="N-acetylmethionine" evidence="2">
    <location>
        <position position="1"/>
    </location>
</feature>
<feature type="modified residue" description="N6-acetyllysine" evidence="2">
    <location>
        <position position="6"/>
    </location>
</feature>
<feature type="modified residue" description="Phosphothreonine" evidence="2">
    <location>
        <position position="14"/>
    </location>
</feature>
<feature type="modified residue" description="Phosphotyrosine; by WEE1" evidence="2">
    <location>
        <position position="15"/>
    </location>
</feature>
<feature type="modified residue" description="Phosphotyrosine" evidence="2">
    <location>
        <position position="19"/>
    </location>
</feature>
<feature type="modified residue" description="Phosphothreonine; by CAK and CCRK" evidence="2">
    <location>
        <position position="160"/>
    </location>
</feature>
<comment type="function">
    <text evidence="2 3">Serine/threonine-protein kinase involved in the control of the cell cycle; essential for meiosis, but dispensable for mitosis. Phosphorylates CABLES1, CTNNB1, CDK2AP2, ERCC6, NBN, USP37, p53/TP53, NPM1, CDK7, RB1, BRCA2, MYC, NPAT, EZH2. Triggers duplication of centrosomes and DNA. Acts at the G1-S transition to promote the E2F transcriptional program and the initiation of DNA synthesis, and modulates G2 progression; controls the timing of entry into mitosis/meiosis by controlling the subsequent activation of cyclin B/CDK1 by phosphorylation, and coordinates the activation of cyclin B/CDK1 at the centrosome and in the nucleus. Crucial role in orchestrating a fine balance between cellular proliferation, cell death, and DNA repair in embryonic stem cells (ESCs). Activity of CDK2 is maximal during S phase and G2; activated by interaction with cyclin E during the early stages of DNA synthesis to permit G1-S transition, and subsequently activated by cyclin A2 (cyclin A1 in germ cells) during the late stages of DNA replication to drive the transition from S phase to mitosis, the G2 phase. EZH2 phosphorylation promotes H3K27me3 maintenance and epigenetic gene silencing. Cyclin E/CDK2 prevents oxidative stress-mediated Ras-induced senescence by phosphorylating MYC. Involved in G1-S phase DNA damage checkpoint that prevents cells with damaged DNA from initiating mitosis; regulates homologous recombination-dependent repair by phosphorylating BRCA2, this phosphorylation is low in S phase when recombination is active, but increases as cells progress towards mitosis. In response to DNA damage, double-strand break repair by homologous recombination a reduction of CDK2-mediated BRCA2 phosphorylation. Involved in regulation of telomere repair by mediating phosphorylation of NBN. Phosphorylation of RB1 disturbs its interaction with E2F1. NPM1 phosphorylation by cyclin E/CDK2 promotes its dissociation from unduplicated centrosomes, thus initiating centrosome duplication. Cyclin E/CDK2-mediated phosphorylation of NPAT at G1-S transition and until prophase stimulates the NPAT-mediated activation of histone gene transcription during S phase. Required for vitamin D-mediated growth inhibition by being itself inactivated. Involved in the nitric oxide- (NO) mediated signaling in a nitrosylation/activation-dependent manner. USP37 is activated by phosphorylation and thus triggers G1-S transition. CTNNB1 phosphorylation regulates insulin internalization (By similarity). Phosphorylates FOXP3 and negatively regulates its transcriptional activity and protein stability (By similarity). Phosphorylates ERCC6 which is essential for its chromatin remodeling activity at DNA double-strand breaks (By similarity). Acts as a regulator of the phosphatidylinositol 3-kinase/protein kinase B signal transduction by mediating phosphorylation of the C-terminus of protein kinase B (PKB/AKT1 and PKB/AKT2), promoting its activation (By similarity).</text>
</comment>
<comment type="catalytic activity">
    <reaction evidence="2">
        <text>L-seryl-[protein] + ATP = O-phospho-L-seryl-[protein] + ADP + H(+)</text>
        <dbReference type="Rhea" id="RHEA:17989"/>
        <dbReference type="Rhea" id="RHEA-COMP:9863"/>
        <dbReference type="Rhea" id="RHEA-COMP:11604"/>
        <dbReference type="ChEBI" id="CHEBI:15378"/>
        <dbReference type="ChEBI" id="CHEBI:29999"/>
        <dbReference type="ChEBI" id="CHEBI:30616"/>
        <dbReference type="ChEBI" id="CHEBI:83421"/>
        <dbReference type="ChEBI" id="CHEBI:456216"/>
        <dbReference type="EC" id="2.7.11.22"/>
    </reaction>
</comment>
<comment type="catalytic activity">
    <reaction evidence="2">
        <text>L-threonyl-[protein] + ATP = O-phospho-L-threonyl-[protein] + ADP + H(+)</text>
        <dbReference type="Rhea" id="RHEA:46608"/>
        <dbReference type="Rhea" id="RHEA-COMP:11060"/>
        <dbReference type="Rhea" id="RHEA-COMP:11605"/>
        <dbReference type="ChEBI" id="CHEBI:15378"/>
        <dbReference type="ChEBI" id="CHEBI:30013"/>
        <dbReference type="ChEBI" id="CHEBI:30616"/>
        <dbReference type="ChEBI" id="CHEBI:61977"/>
        <dbReference type="ChEBI" id="CHEBI:456216"/>
        <dbReference type="EC" id="2.7.11.22"/>
    </reaction>
</comment>
<comment type="cofactor">
    <cofactor evidence="2">
        <name>Mg(2+)</name>
        <dbReference type="ChEBI" id="CHEBI:18420"/>
    </cofactor>
    <text evidence="2">Binds 2 Mg(2+) ions.</text>
</comment>
<comment type="activity regulation">
    <text evidence="2">Phosphorylation at Thr-14 or Tyr-15 inactivates the enzyme, while phosphorylation at Thr-160 activates it. Stimulated by MYC. Inactivated by CDKN1A (p21) (By similarity).</text>
</comment>
<comment type="subunit">
    <text evidence="2 3 4">Found in a complex with CABLES1, CCNA1 and CCNE1. Interacts with CABLES1 (By similarity). Interacts with UHRF2. Part of a complex consisting of UHRF2, CDK2 and CCNE1. Interacts with the Speedy/Ringo proteins SPDYA and SPDYC. Interaction with SPDYA promotes kinase activation via a conformation change that alleviates obstruction of the substrate-binding cleft by the T-loop. Found in a complex with both SPDYA and CDKN1B/KIP1. Binds to RB1 and CDK7. Binding to CDKN1A (p21) leads to CDK2/cyclin E inactivation at the G1-S phase DNA damage checkpoint, thereby arresting cells at the G1-S transition during DNA repair. Associated with PTPN6 and beta-catenin/CTNNB1. Interacts with CACUL1. May interact with CEP63. Interacts with ANKRD17. Interacts with CEBPA (when phosphorylated). Forms a ternary complex with CCNA2 and CDKN1B; CDKN1B inhibits the kinase activity of CDK2 through conformational rearrangements. Interacts with cyclins A, B1, B3, D, or E. Interacts with CDK2AP2 (By similarity).</text>
</comment>
<comment type="subcellular location">
    <subcellularLocation>
        <location evidence="1">Cytoplasm</location>
        <location evidence="1">Cytoskeleton</location>
        <location evidence="1">Microtubule organizing center</location>
        <location evidence="1">Centrosome</location>
    </subcellularLocation>
    <subcellularLocation>
        <location evidence="1">Nucleus</location>
        <location evidence="1">Cajal body</location>
    </subcellularLocation>
    <subcellularLocation>
        <location evidence="1">Cytoplasm</location>
    </subcellularLocation>
    <subcellularLocation>
        <location evidence="1">Endosome</location>
    </subcellularLocation>
    <text evidence="1">Localized at the centrosomes in late G2 phase after separation of the centrosomes but before the start of prophase. Nuclear-cytoplasmic trafficking is mediated during the inhibition by 1,25-(OH)(2)D(3) (By similarity).</text>
</comment>
<comment type="PTM">
    <text evidence="2">Phosphorylated at Thr-160 by CDK7 in a CAK complex. Phosphorylation at Thr-160 promotes kinase activity, whereas phosphorylation at Tyr-15 by WEE1 reduces slightly kinase activity. Phosphorylated on Thr-14 and Tyr-15 during S and G2 phases before being dephosphorylated by CDC25A.</text>
</comment>
<comment type="PTM">
    <text evidence="2">Nitrosylated after treatment with nitric oxide (DETA-NO).</text>
</comment>
<comment type="similarity">
    <text evidence="7">Belongs to the protein kinase superfamily. CMGC Ser/Thr protein kinase family. CDC2/CDKX subfamily.</text>
</comment>
<proteinExistence type="evidence at transcript level"/>
<sequence length="298" mass="33839">MENFQKVEKIGEGTYGVVYKAKNKLTGEVVALKKIRLDTETEGVPSTAIREISLLKELNHPNIVKLLDVIHTENKLYLVFELLHQDLKKFMDASAVTGIPLPLIKSYLFQLLQGLAFCHSHRVLHRDLKPQNLLINAEGSIKLADFGLARAFGVPVRTYTHEVVTLWYRAPEILLGCKYYSTAVDIWSLGCIFAEMVTRRALFPGDSEIDQLFRIFRTLGTPDEVVWPGVTSMPDYKPSFPKWARQDFSKVVPPLDEDGRSLLSQMLHYDPNKRISAKAALAHPFFQDVTKPVPHLRL</sequence>
<reference key="1">
    <citation type="journal article" date="1993" name="Biochem. Biophys. Res. Commun.">
        <title>Molecular cloning and identification of two types of hamster cyclin-dependent kinases: cdk2 and cdk2L.</title>
        <authorList>
            <person name="Noguchi E."/>
            <person name="Sekiguchi T."/>
            <person name="Yamashita K."/>
            <person name="Nishimoto T."/>
        </authorList>
    </citation>
    <scope>NUCLEOTIDE SEQUENCE [MRNA]</scope>
</reference>
<name>CDK2_MESAU</name>
<accession>P48963</accession>
<organism>
    <name type="scientific">Mesocricetus auratus</name>
    <name type="common">Golden hamster</name>
    <dbReference type="NCBI Taxonomy" id="10036"/>
    <lineage>
        <taxon>Eukaryota</taxon>
        <taxon>Metazoa</taxon>
        <taxon>Chordata</taxon>
        <taxon>Craniata</taxon>
        <taxon>Vertebrata</taxon>
        <taxon>Euteleostomi</taxon>
        <taxon>Mammalia</taxon>
        <taxon>Eutheria</taxon>
        <taxon>Euarchontoglires</taxon>
        <taxon>Glires</taxon>
        <taxon>Rodentia</taxon>
        <taxon>Myomorpha</taxon>
        <taxon>Muroidea</taxon>
        <taxon>Cricetidae</taxon>
        <taxon>Cricetinae</taxon>
        <taxon>Mesocricetus</taxon>
    </lineage>
</organism>
<dbReference type="EC" id="2.7.11.22" evidence="2"/>
<dbReference type="EMBL" id="D17350">
    <property type="protein sequence ID" value="BAA04165.1"/>
    <property type="molecule type" value="mRNA"/>
</dbReference>
<dbReference type="SMR" id="P48963"/>
<dbReference type="STRING" id="10036.ENSMAUP00000021672"/>
<dbReference type="BRENDA" id="2.7.11.22">
    <property type="organism ID" value="3239"/>
</dbReference>
<dbReference type="Proteomes" id="UP000189706">
    <property type="component" value="Unplaced"/>
</dbReference>
<dbReference type="GO" id="GO:0015030">
    <property type="term" value="C:Cajal body"/>
    <property type="evidence" value="ECO:0007669"/>
    <property type="project" value="UniProtKB-SubCell"/>
</dbReference>
<dbReference type="GO" id="GO:0005813">
    <property type="term" value="C:centrosome"/>
    <property type="evidence" value="ECO:0007669"/>
    <property type="project" value="UniProtKB-SubCell"/>
</dbReference>
<dbReference type="GO" id="GO:0000307">
    <property type="term" value="C:cyclin-dependent protein kinase holoenzyme complex"/>
    <property type="evidence" value="ECO:0007669"/>
    <property type="project" value="TreeGrafter"/>
</dbReference>
<dbReference type="GO" id="GO:0005768">
    <property type="term" value="C:endosome"/>
    <property type="evidence" value="ECO:0007669"/>
    <property type="project" value="UniProtKB-SubCell"/>
</dbReference>
<dbReference type="GO" id="GO:0005524">
    <property type="term" value="F:ATP binding"/>
    <property type="evidence" value="ECO:0007669"/>
    <property type="project" value="UniProtKB-KW"/>
</dbReference>
<dbReference type="GO" id="GO:0030332">
    <property type="term" value="F:cyclin binding"/>
    <property type="evidence" value="ECO:0007669"/>
    <property type="project" value="TreeGrafter"/>
</dbReference>
<dbReference type="GO" id="GO:0097472">
    <property type="term" value="F:cyclin-dependent protein kinase activity"/>
    <property type="evidence" value="ECO:0000250"/>
    <property type="project" value="UniProtKB"/>
</dbReference>
<dbReference type="GO" id="GO:0004693">
    <property type="term" value="F:cyclin-dependent protein serine/threonine kinase activity"/>
    <property type="evidence" value="ECO:0000250"/>
    <property type="project" value="UniProtKB"/>
</dbReference>
<dbReference type="GO" id="GO:0046872">
    <property type="term" value="F:metal ion binding"/>
    <property type="evidence" value="ECO:0007669"/>
    <property type="project" value="UniProtKB-KW"/>
</dbReference>
<dbReference type="GO" id="GO:0106310">
    <property type="term" value="F:protein serine kinase activity"/>
    <property type="evidence" value="ECO:0007669"/>
    <property type="project" value="RHEA"/>
</dbReference>
<dbReference type="GO" id="GO:0051301">
    <property type="term" value="P:cell division"/>
    <property type="evidence" value="ECO:0007669"/>
    <property type="project" value="UniProtKB-KW"/>
</dbReference>
<dbReference type="GO" id="GO:0006281">
    <property type="term" value="P:DNA repair"/>
    <property type="evidence" value="ECO:0007669"/>
    <property type="project" value="UniProtKB-KW"/>
</dbReference>
<dbReference type="GO" id="GO:0000082">
    <property type="term" value="P:G1/S transition of mitotic cell cycle"/>
    <property type="evidence" value="ECO:0007669"/>
    <property type="project" value="TreeGrafter"/>
</dbReference>
<dbReference type="GO" id="GO:0051321">
    <property type="term" value="P:meiotic cell cycle"/>
    <property type="evidence" value="ECO:0007669"/>
    <property type="project" value="UniProtKB-KW"/>
</dbReference>
<dbReference type="GO" id="GO:0006468">
    <property type="term" value="P:protein phosphorylation"/>
    <property type="evidence" value="ECO:0000250"/>
    <property type="project" value="UniProtKB"/>
</dbReference>
<dbReference type="GO" id="GO:0010389">
    <property type="term" value="P:regulation of G2/M transition of mitotic cell cycle"/>
    <property type="evidence" value="ECO:0007669"/>
    <property type="project" value="TreeGrafter"/>
</dbReference>
<dbReference type="GO" id="GO:0010468">
    <property type="term" value="P:regulation of gene expression"/>
    <property type="evidence" value="ECO:0007669"/>
    <property type="project" value="TreeGrafter"/>
</dbReference>
<dbReference type="GO" id="GO:0007165">
    <property type="term" value="P:signal transduction"/>
    <property type="evidence" value="ECO:0007669"/>
    <property type="project" value="TreeGrafter"/>
</dbReference>
<dbReference type="CDD" id="cd07860">
    <property type="entry name" value="STKc_CDK2_3"/>
    <property type="match status" value="1"/>
</dbReference>
<dbReference type="FunFam" id="1.10.510.10:FF:000144">
    <property type="entry name" value="Cyclin-dependent kinase 2"/>
    <property type="match status" value="1"/>
</dbReference>
<dbReference type="FunFam" id="3.30.200.20:FF:000599">
    <property type="entry name" value="Cyclin-dependent kinase 2"/>
    <property type="match status" value="1"/>
</dbReference>
<dbReference type="Gene3D" id="3.30.200.20">
    <property type="entry name" value="Phosphorylase Kinase, domain 1"/>
    <property type="match status" value="1"/>
</dbReference>
<dbReference type="Gene3D" id="1.10.510.10">
    <property type="entry name" value="Transferase(Phosphotransferase) domain 1"/>
    <property type="match status" value="1"/>
</dbReference>
<dbReference type="InterPro" id="IPR050108">
    <property type="entry name" value="CDK"/>
</dbReference>
<dbReference type="InterPro" id="IPR011009">
    <property type="entry name" value="Kinase-like_dom_sf"/>
</dbReference>
<dbReference type="InterPro" id="IPR000719">
    <property type="entry name" value="Prot_kinase_dom"/>
</dbReference>
<dbReference type="InterPro" id="IPR017441">
    <property type="entry name" value="Protein_kinase_ATP_BS"/>
</dbReference>
<dbReference type="InterPro" id="IPR008271">
    <property type="entry name" value="Ser/Thr_kinase_AS"/>
</dbReference>
<dbReference type="PANTHER" id="PTHR24056">
    <property type="entry name" value="CELL DIVISION PROTEIN KINASE"/>
    <property type="match status" value="1"/>
</dbReference>
<dbReference type="PANTHER" id="PTHR24056:SF521">
    <property type="entry name" value="CYCLIN-DEPENDENT KINASE 2"/>
    <property type="match status" value="1"/>
</dbReference>
<dbReference type="Pfam" id="PF00069">
    <property type="entry name" value="Pkinase"/>
    <property type="match status" value="1"/>
</dbReference>
<dbReference type="SMART" id="SM00220">
    <property type="entry name" value="S_TKc"/>
    <property type="match status" value="1"/>
</dbReference>
<dbReference type="SUPFAM" id="SSF56112">
    <property type="entry name" value="Protein kinase-like (PK-like)"/>
    <property type="match status" value="1"/>
</dbReference>
<dbReference type="PROSITE" id="PS00107">
    <property type="entry name" value="PROTEIN_KINASE_ATP"/>
    <property type="match status" value="1"/>
</dbReference>
<dbReference type="PROSITE" id="PS50011">
    <property type="entry name" value="PROTEIN_KINASE_DOM"/>
    <property type="match status" value="1"/>
</dbReference>
<dbReference type="PROSITE" id="PS00108">
    <property type="entry name" value="PROTEIN_KINASE_ST"/>
    <property type="match status" value="1"/>
</dbReference>